<sequence>MSLFNINKSKKYLIAVSGGPDSVFLLCNIVKLVDPNDLVVCHVNYNFRSDSNNDQMIVTNLCKQLNLKLEILNINKDYSLLKQNFESWARAQRYDFFNMIASKYQIYNLLVAHNLNDLIETYLLQLQRNNLVDYYGLKPVSHYKDLVVYRPLLDIKKSQILNYLNTNKISYAVDSTNSDIKYQRNKIRATLNENNFTKILDQINKANNNLNSIKKIVDNYLKNNIINNELNLTKELFLLDQTCIQRIIYTYFKLINKENLLLNRSNKTISEIVKRLVNSNKNYWKINLNDHSLIKDYNKLFVIKNSLLEPKTIIINDLNDLINQTTFKNIKEIEQIILKDKNFSYVITTDYEMYKSITTIANKKTNRYFIDRKISYKTRLLSPVVYNIKNKIILNKIKKHY</sequence>
<comment type="function">
    <text evidence="1">Ligates lysine onto the cytidine present at position 34 of the AUA codon-specific tRNA(Ile) that contains the anticodon CAU, in an ATP-dependent manner. Cytidine is converted to lysidine, thus changing the amino acid specificity of the tRNA from methionine to isoleucine.</text>
</comment>
<comment type="catalytic activity">
    <reaction evidence="1">
        <text>cytidine(34) in tRNA(Ile2) + L-lysine + ATP = lysidine(34) in tRNA(Ile2) + AMP + diphosphate + H(+)</text>
        <dbReference type="Rhea" id="RHEA:43744"/>
        <dbReference type="Rhea" id="RHEA-COMP:10625"/>
        <dbReference type="Rhea" id="RHEA-COMP:10670"/>
        <dbReference type="ChEBI" id="CHEBI:15378"/>
        <dbReference type="ChEBI" id="CHEBI:30616"/>
        <dbReference type="ChEBI" id="CHEBI:32551"/>
        <dbReference type="ChEBI" id="CHEBI:33019"/>
        <dbReference type="ChEBI" id="CHEBI:82748"/>
        <dbReference type="ChEBI" id="CHEBI:83665"/>
        <dbReference type="ChEBI" id="CHEBI:456215"/>
        <dbReference type="EC" id="6.3.4.19"/>
    </reaction>
</comment>
<comment type="subcellular location">
    <subcellularLocation>
        <location evidence="1">Cytoplasm</location>
    </subcellularLocation>
</comment>
<comment type="domain">
    <text>The N-terminal region contains the highly conserved SGGXDS motif, predicted to be a P-loop motif involved in ATP binding.</text>
</comment>
<comment type="similarity">
    <text evidence="1">Belongs to the tRNA(Ile)-lysidine synthase family.</text>
</comment>
<feature type="chain" id="PRO_0000181729" description="tRNA(Ile)-lysidine synthase">
    <location>
        <begin position="1"/>
        <end position="401"/>
    </location>
</feature>
<feature type="binding site" evidence="1">
    <location>
        <begin position="17"/>
        <end position="22"/>
    </location>
    <ligand>
        <name>ATP</name>
        <dbReference type="ChEBI" id="CHEBI:30616"/>
    </ligand>
</feature>
<name>TILS_MYCMS</name>
<reference key="1">
    <citation type="journal article" date="2004" name="Genome Res.">
        <title>The genome sequence of Mycoplasma mycoides subsp. mycoides SC type strain PG1T, the causative agent of contagious bovine pleuropneumonia (CBPP).</title>
        <authorList>
            <person name="Westberg J."/>
            <person name="Persson A."/>
            <person name="Holmberg A."/>
            <person name="Goesmann A."/>
            <person name="Lundeberg J."/>
            <person name="Johansson K.-E."/>
            <person name="Pettersson B."/>
            <person name="Uhlen M."/>
        </authorList>
    </citation>
    <scope>NUCLEOTIDE SEQUENCE [LARGE SCALE GENOMIC DNA]</scope>
    <source>
        <strain>CCUG 32753 / NCTC 10114 / PG1</strain>
    </source>
</reference>
<dbReference type="EC" id="6.3.4.19" evidence="1"/>
<dbReference type="EMBL" id="BX293980">
    <property type="protein sequence ID" value="CAE76695.1"/>
    <property type="molecule type" value="Genomic_DNA"/>
</dbReference>
<dbReference type="RefSeq" id="NP_975053.1">
    <property type="nucleotide sequence ID" value="NC_005364.2"/>
</dbReference>
<dbReference type="RefSeq" id="WP_011166253.1">
    <property type="nucleotide sequence ID" value="NC_005364.2"/>
</dbReference>
<dbReference type="SMR" id="Q6MUI9"/>
<dbReference type="STRING" id="272632.MSC_0042"/>
<dbReference type="KEGG" id="mmy:MSC_0042"/>
<dbReference type="PATRIC" id="fig|272632.4.peg.42"/>
<dbReference type="eggNOG" id="COG0037">
    <property type="taxonomic scope" value="Bacteria"/>
</dbReference>
<dbReference type="HOGENOM" id="CLU_018869_0_2_14"/>
<dbReference type="Proteomes" id="UP000001016">
    <property type="component" value="Chromosome"/>
</dbReference>
<dbReference type="GO" id="GO:0005737">
    <property type="term" value="C:cytoplasm"/>
    <property type="evidence" value="ECO:0007669"/>
    <property type="project" value="UniProtKB-SubCell"/>
</dbReference>
<dbReference type="GO" id="GO:0005524">
    <property type="term" value="F:ATP binding"/>
    <property type="evidence" value="ECO:0007669"/>
    <property type="project" value="UniProtKB-UniRule"/>
</dbReference>
<dbReference type="GO" id="GO:0032267">
    <property type="term" value="F:tRNA(Ile)-lysidine synthase activity"/>
    <property type="evidence" value="ECO:0007669"/>
    <property type="project" value="UniProtKB-EC"/>
</dbReference>
<dbReference type="GO" id="GO:0006400">
    <property type="term" value="P:tRNA modification"/>
    <property type="evidence" value="ECO:0007669"/>
    <property type="project" value="UniProtKB-UniRule"/>
</dbReference>
<dbReference type="CDD" id="cd01992">
    <property type="entry name" value="TilS_N"/>
    <property type="match status" value="1"/>
</dbReference>
<dbReference type="Gene3D" id="3.40.50.620">
    <property type="entry name" value="HUPs"/>
    <property type="match status" value="1"/>
</dbReference>
<dbReference type="HAMAP" id="MF_01161">
    <property type="entry name" value="tRNA_Ile_lys_synt"/>
    <property type="match status" value="1"/>
</dbReference>
<dbReference type="InterPro" id="IPR014729">
    <property type="entry name" value="Rossmann-like_a/b/a_fold"/>
</dbReference>
<dbReference type="InterPro" id="IPR011063">
    <property type="entry name" value="TilS/TtcA_N"/>
</dbReference>
<dbReference type="InterPro" id="IPR012094">
    <property type="entry name" value="tRNA_Ile_lys_synt"/>
</dbReference>
<dbReference type="InterPro" id="IPR012795">
    <property type="entry name" value="tRNA_Ile_lys_synt_N"/>
</dbReference>
<dbReference type="NCBIfam" id="TIGR02432">
    <property type="entry name" value="lysidine_TilS_N"/>
    <property type="match status" value="1"/>
</dbReference>
<dbReference type="PANTHER" id="PTHR43033">
    <property type="entry name" value="TRNA(ILE)-LYSIDINE SYNTHASE-RELATED"/>
    <property type="match status" value="1"/>
</dbReference>
<dbReference type="PANTHER" id="PTHR43033:SF1">
    <property type="entry name" value="TRNA(ILE)-LYSIDINE SYNTHASE-RELATED"/>
    <property type="match status" value="1"/>
</dbReference>
<dbReference type="Pfam" id="PF01171">
    <property type="entry name" value="ATP_bind_3"/>
    <property type="match status" value="1"/>
</dbReference>
<dbReference type="SUPFAM" id="SSF52402">
    <property type="entry name" value="Adenine nucleotide alpha hydrolases-like"/>
    <property type="match status" value="1"/>
</dbReference>
<organism>
    <name type="scientific">Mycoplasma mycoides subsp. mycoides SC (strain CCUG 32753 / NCTC 10114 / PG1)</name>
    <dbReference type="NCBI Taxonomy" id="272632"/>
    <lineage>
        <taxon>Bacteria</taxon>
        <taxon>Bacillati</taxon>
        <taxon>Mycoplasmatota</taxon>
        <taxon>Mollicutes</taxon>
        <taxon>Mycoplasmataceae</taxon>
        <taxon>Mycoplasma</taxon>
    </lineage>
</organism>
<accession>Q6MUI9</accession>
<gene>
    <name evidence="1" type="primary">tilS</name>
    <name type="ordered locus">MSC_0042</name>
</gene>
<evidence type="ECO:0000255" key="1">
    <source>
        <dbReference type="HAMAP-Rule" id="MF_01161"/>
    </source>
</evidence>
<keyword id="KW-0067">ATP-binding</keyword>
<keyword id="KW-0963">Cytoplasm</keyword>
<keyword id="KW-0436">Ligase</keyword>
<keyword id="KW-0547">Nucleotide-binding</keyword>
<keyword id="KW-1185">Reference proteome</keyword>
<keyword id="KW-0819">tRNA processing</keyword>
<proteinExistence type="inferred from homology"/>
<protein>
    <recommendedName>
        <fullName evidence="1">tRNA(Ile)-lysidine synthase</fullName>
        <ecNumber evidence="1">6.3.4.19</ecNumber>
    </recommendedName>
    <alternativeName>
        <fullName evidence="1">tRNA(Ile)-2-lysyl-cytidine synthase</fullName>
    </alternativeName>
    <alternativeName>
        <fullName evidence="1">tRNA(Ile)-lysidine synthetase</fullName>
    </alternativeName>
</protein>